<accession>A7ZU40</accession>
<feature type="chain" id="PRO_1000070197" description="Ubiquinone/menaquinone biosynthesis C-methyltransferase UbiE">
    <location>
        <begin position="1"/>
        <end position="251"/>
    </location>
</feature>
<feature type="binding site" evidence="1">
    <location>
        <position position="74"/>
    </location>
    <ligand>
        <name>S-adenosyl-L-methionine</name>
        <dbReference type="ChEBI" id="CHEBI:59789"/>
    </ligand>
</feature>
<feature type="binding site" evidence="1">
    <location>
        <position position="95"/>
    </location>
    <ligand>
        <name>S-adenosyl-L-methionine</name>
        <dbReference type="ChEBI" id="CHEBI:59789"/>
    </ligand>
</feature>
<feature type="binding site" evidence="1">
    <location>
        <begin position="123"/>
        <end position="124"/>
    </location>
    <ligand>
        <name>S-adenosyl-L-methionine</name>
        <dbReference type="ChEBI" id="CHEBI:59789"/>
    </ligand>
</feature>
<feature type="binding site" evidence="1">
    <location>
        <position position="140"/>
    </location>
    <ligand>
        <name>S-adenosyl-L-methionine</name>
        <dbReference type="ChEBI" id="CHEBI:59789"/>
    </ligand>
</feature>
<evidence type="ECO:0000255" key="1">
    <source>
        <dbReference type="HAMAP-Rule" id="MF_01813"/>
    </source>
</evidence>
<sequence length="251" mass="28073">MVDKSQETTHFGFQTVAKEQKADMVAHVFHSVASKYDVMNDLMSFGIHRLWKRFTIDCSGVRRGQTVLDLAGGTGDLTAKFSRLVGETGKVVLADINESMLKMGREKLRNIGVIGNVEYVQANAEALPFPDNTFDCITISFGLRNVTDKDKALRSMYRVLKPGGRLLVLEFSKPIIEPLSKAYDAYSFHVLPRIGSLVANDADSYRYLAESIRMHPDQDTLKAMMQDAGFESVDYYNLTAGVVALHRGYKF</sequence>
<dbReference type="EC" id="2.1.1.163" evidence="1"/>
<dbReference type="EC" id="2.1.1.201" evidence="1"/>
<dbReference type="EMBL" id="CP000800">
    <property type="protein sequence ID" value="ABV18496.1"/>
    <property type="molecule type" value="Genomic_DNA"/>
</dbReference>
<dbReference type="RefSeq" id="WP_000227958.1">
    <property type="nucleotide sequence ID" value="NC_009801.1"/>
</dbReference>
<dbReference type="SMR" id="A7ZU40"/>
<dbReference type="GeneID" id="93778102"/>
<dbReference type="KEGG" id="ecw:EcE24377A_4354"/>
<dbReference type="HOGENOM" id="CLU_037990_0_0_6"/>
<dbReference type="UniPathway" id="UPA00079">
    <property type="reaction ID" value="UER00169"/>
</dbReference>
<dbReference type="UniPathway" id="UPA00232"/>
<dbReference type="Proteomes" id="UP000001122">
    <property type="component" value="Chromosome"/>
</dbReference>
<dbReference type="GO" id="GO:0008425">
    <property type="term" value="F:2-methoxy-6-polyprenyl-1,4-benzoquinol methyltransferase activity"/>
    <property type="evidence" value="ECO:0007669"/>
    <property type="project" value="UniProtKB-UniRule"/>
</dbReference>
<dbReference type="GO" id="GO:0043770">
    <property type="term" value="F:demethylmenaquinone methyltransferase activity"/>
    <property type="evidence" value="ECO:0007669"/>
    <property type="project" value="UniProtKB-UniRule"/>
</dbReference>
<dbReference type="GO" id="GO:0009060">
    <property type="term" value="P:aerobic respiration"/>
    <property type="evidence" value="ECO:0007669"/>
    <property type="project" value="UniProtKB-UniRule"/>
</dbReference>
<dbReference type="GO" id="GO:0009234">
    <property type="term" value="P:menaquinone biosynthetic process"/>
    <property type="evidence" value="ECO:0007669"/>
    <property type="project" value="UniProtKB-UniRule"/>
</dbReference>
<dbReference type="GO" id="GO:0032259">
    <property type="term" value="P:methylation"/>
    <property type="evidence" value="ECO:0007669"/>
    <property type="project" value="UniProtKB-KW"/>
</dbReference>
<dbReference type="CDD" id="cd02440">
    <property type="entry name" value="AdoMet_MTases"/>
    <property type="match status" value="1"/>
</dbReference>
<dbReference type="FunFam" id="3.40.50.150:FF:000014">
    <property type="entry name" value="Ubiquinone/menaquinone biosynthesis C-methyltransferase UbiE"/>
    <property type="match status" value="1"/>
</dbReference>
<dbReference type="Gene3D" id="3.40.50.150">
    <property type="entry name" value="Vaccinia Virus protein VP39"/>
    <property type="match status" value="1"/>
</dbReference>
<dbReference type="HAMAP" id="MF_01813">
    <property type="entry name" value="MenG_UbiE_methyltr"/>
    <property type="match status" value="1"/>
</dbReference>
<dbReference type="InterPro" id="IPR029063">
    <property type="entry name" value="SAM-dependent_MTases_sf"/>
</dbReference>
<dbReference type="InterPro" id="IPR004033">
    <property type="entry name" value="UbiE/COQ5_MeTrFase"/>
</dbReference>
<dbReference type="InterPro" id="IPR023576">
    <property type="entry name" value="UbiE/COQ5_MeTrFase_CS"/>
</dbReference>
<dbReference type="NCBIfam" id="TIGR01934">
    <property type="entry name" value="MenG_MenH_UbiE"/>
    <property type="match status" value="1"/>
</dbReference>
<dbReference type="NCBIfam" id="NF001240">
    <property type="entry name" value="PRK00216.1-1"/>
    <property type="match status" value="1"/>
</dbReference>
<dbReference type="NCBIfam" id="NF001242">
    <property type="entry name" value="PRK00216.1-3"/>
    <property type="match status" value="1"/>
</dbReference>
<dbReference type="NCBIfam" id="NF001244">
    <property type="entry name" value="PRK00216.1-5"/>
    <property type="match status" value="1"/>
</dbReference>
<dbReference type="PANTHER" id="PTHR43591:SF24">
    <property type="entry name" value="2-METHOXY-6-POLYPRENYL-1,4-BENZOQUINOL METHYLASE, MITOCHONDRIAL"/>
    <property type="match status" value="1"/>
</dbReference>
<dbReference type="PANTHER" id="PTHR43591">
    <property type="entry name" value="METHYLTRANSFERASE"/>
    <property type="match status" value="1"/>
</dbReference>
<dbReference type="Pfam" id="PF01209">
    <property type="entry name" value="Ubie_methyltran"/>
    <property type="match status" value="1"/>
</dbReference>
<dbReference type="SUPFAM" id="SSF53335">
    <property type="entry name" value="S-adenosyl-L-methionine-dependent methyltransferases"/>
    <property type="match status" value="1"/>
</dbReference>
<dbReference type="PROSITE" id="PS51608">
    <property type="entry name" value="SAM_MT_UBIE"/>
    <property type="match status" value="1"/>
</dbReference>
<dbReference type="PROSITE" id="PS01183">
    <property type="entry name" value="UBIE_1"/>
    <property type="match status" value="1"/>
</dbReference>
<dbReference type="PROSITE" id="PS01184">
    <property type="entry name" value="UBIE_2"/>
    <property type="match status" value="1"/>
</dbReference>
<proteinExistence type="inferred from homology"/>
<comment type="function">
    <text evidence="1">Methyltransferase required for the conversion of demethylmenaquinol (DMKH2) to menaquinol (MKH2) and the conversion of 2-polyprenyl-6-methoxy-1,4-benzoquinol (DDMQH2) to 2-polyprenyl-3-methyl-6-methoxy-1,4-benzoquinol (DMQH2).</text>
</comment>
<comment type="catalytic activity">
    <reaction evidence="1">
        <text>a 2-demethylmenaquinol + S-adenosyl-L-methionine = a menaquinol + S-adenosyl-L-homocysteine + H(+)</text>
        <dbReference type="Rhea" id="RHEA:42640"/>
        <dbReference type="Rhea" id="RHEA-COMP:9539"/>
        <dbReference type="Rhea" id="RHEA-COMP:9563"/>
        <dbReference type="ChEBI" id="CHEBI:15378"/>
        <dbReference type="ChEBI" id="CHEBI:18151"/>
        <dbReference type="ChEBI" id="CHEBI:55437"/>
        <dbReference type="ChEBI" id="CHEBI:57856"/>
        <dbReference type="ChEBI" id="CHEBI:59789"/>
        <dbReference type="EC" id="2.1.1.163"/>
    </reaction>
</comment>
<comment type="catalytic activity">
    <reaction evidence="1">
        <text>a 2-methoxy-6-(all-trans-polyprenyl)benzene-1,4-diol + S-adenosyl-L-methionine = a 5-methoxy-2-methyl-3-(all-trans-polyprenyl)benzene-1,4-diol + S-adenosyl-L-homocysteine + H(+)</text>
        <dbReference type="Rhea" id="RHEA:28286"/>
        <dbReference type="Rhea" id="RHEA-COMP:10858"/>
        <dbReference type="Rhea" id="RHEA-COMP:10859"/>
        <dbReference type="ChEBI" id="CHEBI:15378"/>
        <dbReference type="ChEBI" id="CHEBI:57856"/>
        <dbReference type="ChEBI" id="CHEBI:59789"/>
        <dbReference type="ChEBI" id="CHEBI:84166"/>
        <dbReference type="ChEBI" id="CHEBI:84167"/>
        <dbReference type="EC" id="2.1.1.201"/>
    </reaction>
</comment>
<comment type="pathway">
    <text evidence="1">Quinol/quinone metabolism; menaquinone biosynthesis; menaquinol from 1,4-dihydroxy-2-naphthoate: step 2/2.</text>
</comment>
<comment type="pathway">
    <text evidence="1">Cofactor biosynthesis; ubiquinone biosynthesis.</text>
</comment>
<comment type="similarity">
    <text evidence="1">Belongs to the class I-like SAM-binding methyltransferase superfamily. MenG/UbiE family.</text>
</comment>
<reference key="1">
    <citation type="journal article" date="2008" name="J. Bacteriol.">
        <title>The pangenome structure of Escherichia coli: comparative genomic analysis of E. coli commensal and pathogenic isolates.</title>
        <authorList>
            <person name="Rasko D.A."/>
            <person name="Rosovitz M.J."/>
            <person name="Myers G.S.A."/>
            <person name="Mongodin E.F."/>
            <person name="Fricke W.F."/>
            <person name="Gajer P."/>
            <person name="Crabtree J."/>
            <person name="Sebaihia M."/>
            <person name="Thomson N.R."/>
            <person name="Chaudhuri R."/>
            <person name="Henderson I.R."/>
            <person name="Sperandio V."/>
            <person name="Ravel J."/>
        </authorList>
    </citation>
    <scope>NUCLEOTIDE SEQUENCE [LARGE SCALE GENOMIC DNA]</scope>
    <source>
        <strain>E24377A / ETEC</strain>
    </source>
</reference>
<gene>
    <name evidence="1" type="primary">ubiE</name>
    <name type="ordered locus">EcE24377A_4354</name>
</gene>
<keyword id="KW-0474">Menaquinone biosynthesis</keyword>
<keyword id="KW-0489">Methyltransferase</keyword>
<keyword id="KW-1185">Reference proteome</keyword>
<keyword id="KW-0949">S-adenosyl-L-methionine</keyword>
<keyword id="KW-0808">Transferase</keyword>
<keyword id="KW-0831">Ubiquinone biosynthesis</keyword>
<name>UBIE_ECO24</name>
<protein>
    <recommendedName>
        <fullName evidence="1">Ubiquinone/menaquinone biosynthesis C-methyltransferase UbiE</fullName>
        <ecNumber evidence="1">2.1.1.163</ecNumber>
        <ecNumber evidence="1">2.1.1.201</ecNumber>
    </recommendedName>
    <alternativeName>
        <fullName evidence="1">2-methoxy-6-polyprenyl-1,4-benzoquinol methylase</fullName>
    </alternativeName>
    <alternativeName>
        <fullName evidence="1">Demethylmenaquinone methyltransferase</fullName>
    </alternativeName>
</protein>
<organism>
    <name type="scientific">Escherichia coli O139:H28 (strain E24377A / ETEC)</name>
    <dbReference type="NCBI Taxonomy" id="331111"/>
    <lineage>
        <taxon>Bacteria</taxon>
        <taxon>Pseudomonadati</taxon>
        <taxon>Pseudomonadota</taxon>
        <taxon>Gammaproteobacteria</taxon>
        <taxon>Enterobacterales</taxon>
        <taxon>Enterobacteriaceae</taxon>
        <taxon>Escherichia</taxon>
    </lineage>
</organism>